<comment type="function">
    <text evidence="2">With S4 and S5 plays an important role in translational accuracy.</text>
</comment>
<comment type="function">
    <text evidence="2">Interacts with and stabilizes bases of the 16S rRNA that are involved in tRNA selection in the A site and with the mRNA backbone. Located at the interface of the 30S and 50S subunits, it traverses the body of the 30S subunit contacting proteins on the other side and probably holding the rRNA structure together. The combined cluster of proteins S8, S12 and S17 appears to hold together the shoulder and platform of the 30S subunit.</text>
</comment>
<comment type="subunit">
    <text evidence="2">Part of the 30S ribosomal subunit. Contacts proteins S8 and S17. May interact with IF1 in the 30S initiation complex.</text>
</comment>
<comment type="similarity">
    <text evidence="2">Belongs to the universal ribosomal protein uS12 family.</text>
</comment>
<evidence type="ECO:0000250" key="1"/>
<evidence type="ECO:0000255" key="2">
    <source>
        <dbReference type="HAMAP-Rule" id="MF_00403"/>
    </source>
</evidence>
<evidence type="ECO:0000256" key="3">
    <source>
        <dbReference type="SAM" id="MobiDB-lite"/>
    </source>
</evidence>
<evidence type="ECO:0000305" key="4"/>
<reference key="1">
    <citation type="journal article" date="2011" name="J. Bacteriol.">
        <title>Whole-genome sequences of thirteen isolates of Borrelia burgdorferi.</title>
        <authorList>
            <person name="Schutzer S.E."/>
            <person name="Fraser-Liggett C.M."/>
            <person name="Casjens S.R."/>
            <person name="Qiu W.G."/>
            <person name="Dunn J.J."/>
            <person name="Mongodin E.F."/>
            <person name="Luft B.J."/>
        </authorList>
    </citation>
    <scope>NUCLEOTIDE SEQUENCE [LARGE SCALE GENOMIC DNA]</scope>
    <source>
        <strain>ZS7</strain>
    </source>
</reference>
<keyword id="KW-0488">Methylation</keyword>
<keyword id="KW-0687">Ribonucleoprotein</keyword>
<keyword id="KW-0689">Ribosomal protein</keyword>
<keyword id="KW-0694">RNA-binding</keyword>
<keyword id="KW-0699">rRNA-binding</keyword>
<keyword id="KW-0820">tRNA-binding</keyword>
<sequence length="124" mass="13792">MPTINQLIRKPRKSQTEKTASPALQNCPQRRGICTRVMTVTPKKPNSALRKVARVRLSNGFEVTAYIPGIGHNLQEHSVVLIRGGRVKDLPGVRYHIVRGAKDTLGVNNRKKGRSKYGTKKPKA</sequence>
<protein>
    <recommendedName>
        <fullName evidence="2">Small ribosomal subunit protein uS12</fullName>
    </recommendedName>
    <alternativeName>
        <fullName evidence="4">30S ribosomal protein S12</fullName>
    </alternativeName>
</protein>
<accession>B7J1V9</accession>
<name>RS12_BORBZ</name>
<proteinExistence type="inferred from homology"/>
<organism>
    <name type="scientific">Borreliella burgdorferi (strain ZS7)</name>
    <name type="common">Borrelia burgdorferi</name>
    <dbReference type="NCBI Taxonomy" id="445985"/>
    <lineage>
        <taxon>Bacteria</taxon>
        <taxon>Pseudomonadati</taxon>
        <taxon>Spirochaetota</taxon>
        <taxon>Spirochaetia</taxon>
        <taxon>Spirochaetales</taxon>
        <taxon>Borreliaceae</taxon>
        <taxon>Borreliella</taxon>
    </lineage>
</organism>
<dbReference type="EMBL" id="CP001205">
    <property type="protein sequence ID" value="ACK74496.1"/>
    <property type="molecule type" value="Genomic_DNA"/>
</dbReference>
<dbReference type="RefSeq" id="WP_002656492.1">
    <property type="nucleotide sequence ID" value="NC_011728.1"/>
</dbReference>
<dbReference type="SMR" id="B7J1V9"/>
<dbReference type="GeneID" id="83865854"/>
<dbReference type="KEGG" id="bbz:BbuZS7_0389"/>
<dbReference type="HOGENOM" id="CLU_104295_1_2_12"/>
<dbReference type="Proteomes" id="UP000006901">
    <property type="component" value="Chromosome"/>
</dbReference>
<dbReference type="GO" id="GO:0015935">
    <property type="term" value="C:small ribosomal subunit"/>
    <property type="evidence" value="ECO:0007669"/>
    <property type="project" value="InterPro"/>
</dbReference>
<dbReference type="GO" id="GO:0019843">
    <property type="term" value="F:rRNA binding"/>
    <property type="evidence" value="ECO:0007669"/>
    <property type="project" value="UniProtKB-UniRule"/>
</dbReference>
<dbReference type="GO" id="GO:0003735">
    <property type="term" value="F:structural constituent of ribosome"/>
    <property type="evidence" value="ECO:0007669"/>
    <property type="project" value="InterPro"/>
</dbReference>
<dbReference type="GO" id="GO:0000049">
    <property type="term" value="F:tRNA binding"/>
    <property type="evidence" value="ECO:0007669"/>
    <property type="project" value="UniProtKB-UniRule"/>
</dbReference>
<dbReference type="GO" id="GO:0006412">
    <property type="term" value="P:translation"/>
    <property type="evidence" value="ECO:0007669"/>
    <property type="project" value="UniProtKB-UniRule"/>
</dbReference>
<dbReference type="CDD" id="cd03368">
    <property type="entry name" value="Ribosomal_S12"/>
    <property type="match status" value="1"/>
</dbReference>
<dbReference type="FunFam" id="2.40.50.140:FF:000001">
    <property type="entry name" value="30S ribosomal protein S12"/>
    <property type="match status" value="1"/>
</dbReference>
<dbReference type="Gene3D" id="2.40.50.140">
    <property type="entry name" value="Nucleic acid-binding proteins"/>
    <property type="match status" value="1"/>
</dbReference>
<dbReference type="HAMAP" id="MF_00403_B">
    <property type="entry name" value="Ribosomal_uS12_B"/>
    <property type="match status" value="1"/>
</dbReference>
<dbReference type="InterPro" id="IPR012340">
    <property type="entry name" value="NA-bd_OB-fold"/>
</dbReference>
<dbReference type="InterPro" id="IPR006032">
    <property type="entry name" value="Ribosomal_uS12"/>
</dbReference>
<dbReference type="InterPro" id="IPR005679">
    <property type="entry name" value="Ribosomal_uS12_bac"/>
</dbReference>
<dbReference type="NCBIfam" id="TIGR00981">
    <property type="entry name" value="rpsL_bact"/>
    <property type="match status" value="1"/>
</dbReference>
<dbReference type="PANTHER" id="PTHR11652">
    <property type="entry name" value="30S RIBOSOMAL PROTEIN S12 FAMILY MEMBER"/>
    <property type="match status" value="1"/>
</dbReference>
<dbReference type="Pfam" id="PF00164">
    <property type="entry name" value="Ribosom_S12_S23"/>
    <property type="match status" value="1"/>
</dbReference>
<dbReference type="PIRSF" id="PIRSF002133">
    <property type="entry name" value="Ribosomal_S12/S23"/>
    <property type="match status" value="1"/>
</dbReference>
<dbReference type="PRINTS" id="PR01034">
    <property type="entry name" value="RIBOSOMALS12"/>
</dbReference>
<dbReference type="SUPFAM" id="SSF50249">
    <property type="entry name" value="Nucleic acid-binding proteins"/>
    <property type="match status" value="1"/>
</dbReference>
<dbReference type="PROSITE" id="PS00055">
    <property type="entry name" value="RIBOSOMAL_S12"/>
    <property type="match status" value="1"/>
</dbReference>
<feature type="chain" id="PRO_1000194130" description="Small ribosomal subunit protein uS12">
    <location>
        <begin position="1"/>
        <end position="124"/>
    </location>
</feature>
<feature type="region of interest" description="Disordered" evidence="3">
    <location>
        <begin position="1"/>
        <end position="27"/>
    </location>
</feature>
<feature type="compositionally biased region" description="Polar residues" evidence="3">
    <location>
        <begin position="17"/>
        <end position="27"/>
    </location>
</feature>
<feature type="modified residue" description="3-methylthioaspartic acid" evidence="1">
    <location>
        <position position="89"/>
    </location>
</feature>
<gene>
    <name evidence="2" type="primary">rpsL</name>
    <name type="ordered locus">BbuZS7_0389</name>
</gene>